<dbReference type="EMBL" id="AB025639">
    <property type="protein sequence ID" value="BAB01312.1"/>
    <property type="status" value="ALT_SEQ"/>
    <property type="molecule type" value="Genomic_DNA"/>
</dbReference>
<dbReference type="EMBL" id="CP002686">
    <property type="protein sequence ID" value="AEE77008.1"/>
    <property type="molecule type" value="Genomic_DNA"/>
</dbReference>
<dbReference type="EMBL" id="AY081301">
    <property type="protein sequence ID" value="AAL91190.1"/>
    <property type="molecule type" value="mRNA"/>
</dbReference>
<dbReference type="EMBL" id="AY128781">
    <property type="protein sequence ID" value="AAM91181.1"/>
    <property type="molecule type" value="mRNA"/>
</dbReference>
<dbReference type="EMBL" id="AY086664">
    <property type="protein sequence ID" value="AAM63721.1"/>
    <property type="molecule type" value="mRNA"/>
</dbReference>
<dbReference type="RefSeq" id="NP_566764.1">
    <property type="nucleotide sequence ID" value="NM_113437.3"/>
</dbReference>
<dbReference type="SMR" id="Q8RXE8"/>
<dbReference type="FunCoup" id="Q8RXE8">
    <property type="interactions" value="290"/>
</dbReference>
<dbReference type="STRING" id="3702.Q8RXE8"/>
<dbReference type="iPTMnet" id="Q8RXE8"/>
<dbReference type="PaxDb" id="3702-AT3G25410.1"/>
<dbReference type="ProteomicsDB" id="240642"/>
<dbReference type="EnsemblPlants" id="AT3G25410.1">
    <property type="protein sequence ID" value="AT3G25410.1"/>
    <property type="gene ID" value="AT3G25410"/>
</dbReference>
<dbReference type="GeneID" id="822125"/>
<dbReference type="Gramene" id="AT3G25410.1">
    <property type="protein sequence ID" value="AT3G25410.1"/>
    <property type="gene ID" value="AT3G25410"/>
</dbReference>
<dbReference type="KEGG" id="ath:AT3G25410"/>
<dbReference type="Araport" id="AT3G25410"/>
<dbReference type="TAIR" id="AT3G25410"/>
<dbReference type="eggNOG" id="KOG2718">
    <property type="taxonomic scope" value="Eukaryota"/>
</dbReference>
<dbReference type="HOGENOM" id="CLU_034788_3_0_1"/>
<dbReference type="InParanoid" id="Q8RXE8"/>
<dbReference type="OMA" id="NIMMETT"/>
<dbReference type="OrthoDB" id="203097at2759"/>
<dbReference type="PhylomeDB" id="Q8RXE8"/>
<dbReference type="PRO" id="PR:Q8RXE8"/>
<dbReference type="Proteomes" id="UP000006548">
    <property type="component" value="Chromosome 3"/>
</dbReference>
<dbReference type="ExpressionAtlas" id="Q8RXE8">
    <property type="expression patterns" value="baseline and differential"/>
</dbReference>
<dbReference type="GO" id="GO:0009941">
    <property type="term" value="C:chloroplast envelope"/>
    <property type="evidence" value="ECO:0000314"/>
    <property type="project" value="UniProtKB"/>
</dbReference>
<dbReference type="GO" id="GO:0016020">
    <property type="term" value="C:membrane"/>
    <property type="evidence" value="ECO:0007669"/>
    <property type="project" value="UniProtKB-SubCell"/>
</dbReference>
<dbReference type="FunFam" id="1.20.1530.20:FF:000018">
    <property type="entry name" value="Probable sodium/metabolite cotransporter BASS1, chloroplastic"/>
    <property type="match status" value="1"/>
</dbReference>
<dbReference type="Gene3D" id="1.20.1530.20">
    <property type="match status" value="1"/>
</dbReference>
<dbReference type="InterPro" id="IPR002657">
    <property type="entry name" value="BilAc:Na_symport/Acr3"/>
</dbReference>
<dbReference type="InterPro" id="IPR004710">
    <property type="entry name" value="Bilac:Na_transpt"/>
</dbReference>
<dbReference type="InterPro" id="IPR038770">
    <property type="entry name" value="Na+/solute_symporter_sf"/>
</dbReference>
<dbReference type="PANTHER" id="PTHR10361">
    <property type="entry name" value="SODIUM-BILE ACID COTRANSPORTER"/>
    <property type="match status" value="1"/>
</dbReference>
<dbReference type="PANTHER" id="PTHR10361:SF33">
    <property type="entry name" value="SODIUM_METABOLITE COTRANSPORTER BASS3, CHLOROPLASTIC-RELATED"/>
    <property type="match status" value="1"/>
</dbReference>
<dbReference type="Pfam" id="PF01758">
    <property type="entry name" value="SBF"/>
    <property type="match status" value="1"/>
</dbReference>
<sequence>MTLIASLSLPPPAIQRQSLSEFHNLPAKSQSFNCQFRSSSSPLSSLHSSSLSNFLDFRLRRRNSGLVPVVACSTTPFMGRVGLHWRDGNMSLLSFCGGTDVTEKADSSQFWSALLPFVVALTAVAALSYPPSFTWVSKDLYAPALGGIMLSIGIQLSVDDFALAFKRPVPLSVGFVAQYVLKPLLGVLVANAFGMPRTFYAGFILTCCVAGAQLSSYASSLSKADVAMSILLTSSTTIASVIFTPLLSGLLIGSVVPVDAVAMSKSILQVVLVPITLGLVLNTYAKPVVTLLQPVMPFVAMVCTSLCIGSPLSINRSQILSAEGLGLIVPIVTFHAVAFALGYWFSKIPGLRQEEEVSRTISLCTGMQSSTLAGLLASQFLGSSQAVPAACSVVVMAIMGLCLASFWGNGFRIRDVLSLSTPQSTGYTAES</sequence>
<reference key="1">
    <citation type="journal article" date="2000" name="DNA Res.">
        <title>Structural analysis of Arabidopsis thaliana chromosome 3. I. Sequence features of the regions of 4,504,864 bp covered by sixty P1 and TAC clones.</title>
        <authorList>
            <person name="Sato S."/>
            <person name="Nakamura Y."/>
            <person name="Kaneko T."/>
            <person name="Katoh T."/>
            <person name="Asamizu E."/>
            <person name="Tabata S."/>
        </authorList>
    </citation>
    <scope>NUCLEOTIDE SEQUENCE [LARGE SCALE GENOMIC DNA]</scope>
    <source>
        <strain>cv. Columbia</strain>
    </source>
</reference>
<reference key="2">
    <citation type="journal article" date="2017" name="Plant J.">
        <title>Araport11: a complete reannotation of the Arabidopsis thaliana reference genome.</title>
        <authorList>
            <person name="Cheng C.Y."/>
            <person name="Krishnakumar V."/>
            <person name="Chan A.P."/>
            <person name="Thibaud-Nissen F."/>
            <person name="Schobel S."/>
            <person name="Town C.D."/>
        </authorList>
    </citation>
    <scope>GENOME REANNOTATION</scope>
    <source>
        <strain>cv. Columbia</strain>
    </source>
</reference>
<reference key="3">
    <citation type="journal article" date="2003" name="Science">
        <title>Empirical analysis of transcriptional activity in the Arabidopsis genome.</title>
        <authorList>
            <person name="Yamada K."/>
            <person name="Lim J."/>
            <person name="Dale J.M."/>
            <person name="Chen H."/>
            <person name="Shinn P."/>
            <person name="Palm C.J."/>
            <person name="Southwick A.M."/>
            <person name="Wu H.C."/>
            <person name="Kim C.J."/>
            <person name="Nguyen M."/>
            <person name="Pham P.K."/>
            <person name="Cheuk R.F."/>
            <person name="Karlin-Newmann G."/>
            <person name="Liu S.X."/>
            <person name="Lam B."/>
            <person name="Sakano H."/>
            <person name="Wu T."/>
            <person name="Yu G."/>
            <person name="Miranda M."/>
            <person name="Quach H.L."/>
            <person name="Tripp M."/>
            <person name="Chang C.H."/>
            <person name="Lee J.M."/>
            <person name="Toriumi M.J."/>
            <person name="Chan M.M."/>
            <person name="Tang C.C."/>
            <person name="Onodera C.S."/>
            <person name="Deng J.M."/>
            <person name="Akiyama K."/>
            <person name="Ansari Y."/>
            <person name="Arakawa T."/>
            <person name="Banh J."/>
            <person name="Banno F."/>
            <person name="Bowser L."/>
            <person name="Brooks S.Y."/>
            <person name="Carninci P."/>
            <person name="Chao Q."/>
            <person name="Choy N."/>
            <person name="Enju A."/>
            <person name="Goldsmith A.D."/>
            <person name="Gurjal M."/>
            <person name="Hansen N.F."/>
            <person name="Hayashizaki Y."/>
            <person name="Johnson-Hopson C."/>
            <person name="Hsuan V.W."/>
            <person name="Iida K."/>
            <person name="Karnes M."/>
            <person name="Khan S."/>
            <person name="Koesema E."/>
            <person name="Ishida J."/>
            <person name="Jiang P.X."/>
            <person name="Jones T."/>
            <person name="Kawai J."/>
            <person name="Kamiya A."/>
            <person name="Meyers C."/>
            <person name="Nakajima M."/>
            <person name="Narusaka M."/>
            <person name="Seki M."/>
            <person name="Sakurai T."/>
            <person name="Satou M."/>
            <person name="Tamse R."/>
            <person name="Vaysberg M."/>
            <person name="Wallender E.K."/>
            <person name="Wong C."/>
            <person name="Yamamura Y."/>
            <person name="Yuan S."/>
            <person name="Shinozaki K."/>
            <person name="Davis R.W."/>
            <person name="Theologis A."/>
            <person name="Ecker J.R."/>
        </authorList>
    </citation>
    <scope>NUCLEOTIDE SEQUENCE [LARGE SCALE MRNA]</scope>
    <source>
        <strain>cv. Columbia</strain>
    </source>
</reference>
<reference key="4">
    <citation type="submission" date="2002-03" db="EMBL/GenBank/DDBJ databases">
        <title>Full-length cDNA from Arabidopsis thaliana.</title>
        <authorList>
            <person name="Brover V.V."/>
            <person name="Troukhan M.E."/>
            <person name="Alexandrov N.A."/>
            <person name="Lu Y.-P."/>
            <person name="Flavell R.B."/>
            <person name="Feldmann K.A."/>
        </authorList>
    </citation>
    <scope>NUCLEOTIDE SEQUENCE [LARGE SCALE MRNA]</scope>
</reference>
<reference key="5">
    <citation type="journal article" date="2009" name="Plant Cell">
        <title>The plastidic bile acid transporter 5 is required for the biosynthesis of methionine-derived glucosinolates in Arabidopsis thaliana.</title>
        <authorList>
            <person name="Gigolashvili T."/>
            <person name="Yatusevich R."/>
            <person name="Rollwitz I."/>
            <person name="Humphry M."/>
            <person name="Gershenzon J."/>
            <person name="Fluegge U.-I."/>
        </authorList>
    </citation>
    <scope>SUBCELLULAR LOCATION</scope>
</reference>
<proteinExistence type="evidence at transcript level"/>
<name>BASS3_ARATH</name>
<evidence type="ECO:0000250" key="1"/>
<evidence type="ECO:0000255" key="2"/>
<evidence type="ECO:0000305" key="3"/>
<evidence type="ECO:0000305" key="4">
    <source>
    </source>
</evidence>
<accession>Q8RXE8</accession>
<accession>Q8LCD3</accession>
<accession>Q9LSV9</accession>
<protein>
    <recommendedName>
        <fullName>Probable sodium/metabolite cotransporter BASS3, chloroplastic</fullName>
    </recommendedName>
    <alternativeName>
        <fullName>Bile acid transporter 3</fullName>
    </alternativeName>
    <alternativeName>
        <fullName>Bile acid-sodium symporter family protein 3</fullName>
    </alternativeName>
</protein>
<comment type="function">
    <text evidence="1">May function as sodium-coupled metabolite transporter across the chloroplast envelope.</text>
</comment>
<comment type="subcellular location">
    <subcellularLocation>
        <location evidence="4">Membrane</location>
        <topology evidence="4">Multi-pass membrane protein</topology>
    </subcellularLocation>
    <subcellularLocation>
        <location evidence="4">Plastid</location>
        <location evidence="4">Chloroplast envelope</location>
    </subcellularLocation>
</comment>
<comment type="similarity">
    <text evidence="3">Belongs to the bile acid:sodium symporter (BASS) (TC 2.A.28) family.</text>
</comment>
<comment type="sequence caution" evidence="3">
    <conflict type="erroneous gene model prediction">
        <sequence resource="EMBL-CDS" id="BAB01312"/>
    </conflict>
</comment>
<gene>
    <name type="primary">BASS3</name>
    <name type="synonym">BAT3</name>
    <name type="ordered locus">At3g25410</name>
    <name type="ORF">MWL2.2</name>
</gene>
<feature type="transit peptide" description="Chloroplast" evidence="2">
    <location>
        <begin position="1"/>
        <end position="70"/>
    </location>
</feature>
<feature type="chain" id="PRO_0000418604" description="Probable sodium/metabolite cotransporter BASS3, chloroplastic">
    <location>
        <begin position="71"/>
        <end position="431"/>
    </location>
</feature>
<feature type="transmembrane region" description="Helical" evidence="2">
    <location>
        <begin position="110"/>
        <end position="130"/>
    </location>
</feature>
<feature type="transmembrane region" description="Helical" evidence="2">
    <location>
        <begin position="145"/>
        <end position="165"/>
    </location>
</feature>
<feature type="transmembrane region" description="Helical" evidence="2">
    <location>
        <begin position="169"/>
        <end position="189"/>
    </location>
</feature>
<feature type="transmembrane region" description="Helical" evidence="2">
    <location>
        <begin position="198"/>
        <end position="218"/>
    </location>
</feature>
<feature type="transmembrane region" description="Helical" evidence="2">
    <location>
        <begin position="238"/>
        <end position="258"/>
    </location>
</feature>
<feature type="transmembrane region" description="Helical" evidence="2">
    <location>
        <begin position="261"/>
        <end position="281"/>
    </location>
</feature>
<feature type="transmembrane region" description="Helical" evidence="2">
    <location>
        <begin position="288"/>
        <end position="308"/>
    </location>
</feature>
<feature type="transmembrane region" description="Helical" evidence="2">
    <location>
        <begin position="325"/>
        <end position="345"/>
    </location>
</feature>
<feature type="transmembrane region" description="Helical" evidence="2">
    <location>
        <begin position="387"/>
        <end position="407"/>
    </location>
</feature>
<feature type="sequence conflict" description="In Ref. 4; AAM63721." evidence="3" ref="4">
    <original>K</original>
    <variation>R</variation>
    <location>
        <position position="104"/>
    </location>
</feature>
<feature type="sequence conflict" description="In Ref. 4; AAM63721." evidence="3" ref="4">
    <original>T</original>
    <variation>R</variation>
    <location>
        <position position="425"/>
    </location>
</feature>
<feature type="sequence conflict" description="In Ref. 4; AAM63721." evidence="3" ref="4">
    <original>A</original>
    <variation>T</variation>
    <location>
        <position position="429"/>
    </location>
</feature>
<keyword id="KW-0150">Chloroplast</keyword>
<keyword id="KW-0472">Membrane</keyword>
<keyword id="KW-0934">Plastid</keyword>
<keyword id="KW-1185">Reference proteome</keyword>
<keyword id="KW-0809">Transit peptide</keyword>
<keyword id="KW-0812">Transmembrane</keyword>
<keyword id="KW-1133">Transmembrane helix</keyword>
<keyword id="KW-0813">Transport</keyword>
<organism>
    <name type="scientific">Arabidopsis thaliana</name>
    <name type="common">Mouse-ear cress</name>
    <dbReference type="NCBI Taxonomy" id="3702"/>
    <lineage>
        <taxon>Eukaryota</taxon>
        <taxon>Viridiplantae</taxon>
        <taxon>Streptophyta</taxon>
        <taxon>Embryophyta</taxon>
        <taxon>Tracheophyta</taxon>
        <taxon>Spermatophyta</taxon>
        <taxon>Magnoliopsida</taxon>
        <taxon>eudicotyledons</taxon>
        <taxon>Gunneridae</taxon>
        <taxon>Pentapetalae</taxon>
        <taxon>rosids</taxon>
        <taxon>malvids</taxon>
        <taxon>Brassicales</taxon>
        <taxon>Brassicaceae</taxon>
        <taxon>Camelineae</taxon>
        <taxon>Arabidopsis</taxon>
    </lineage>
</organism>